<comment type="subcellular location">
    <subcellularLocation>
        <location>Secreted</location>
    </subcellularLocation>
</comment>
<comment type="domain">
    <text>Avian ovomucoid consists of three homologous, tandem Kazal family inhibitory domains.</text>
</comment>
<accession>P68390</accession>
<accession>P01004</accession>
<keyword id="KW-0002">3D-structure</keyword>
<keyword id="KW-0903">Direct protein sequencing</keyword>
<keyword id="KW-1015">Disulfide bond</keyword>
<keyword id="KW-0325">Glycoprotein</keyword>
<keyword id="KW-0646">Protease inhibitor</keyword>
<keyword id="KW-1185">Reference proteome</keyword>
<keyword id="KW-0677">Repeat</keyword>
<keyword id="KW-0964">Secreted</keyword>
<keyword id="KW-0722">Serine protease inhibitor</keyword>
<sequence>VEVDCSRFPNTTNEEGKDVLVCTEDLRPICGTDGVTHSECLLCAYNIEYGTNISKEHDGECREAVPMDCSRYPNTTSEEGKVMILCNKALNPVCGTDGVTYDNECVLCAHNLEQGTSVGKKHDGECRKELAAVSVDCSEYPKPACTLEYRPLCGSDNKTYGNKCNFCNAVVESNGTLTLSHFGKC</sequence>
<protein>
    <recommendedName>
        <fullName>Ovomucoid</fullName>
    </recommendedName>
</protein>
<organism>
    <name type="scientific">Meleagris gallopavo</name>
    <name type="common">Wild turkey</name>
    <dbReference type="NCBI Taxonomy" id="9103"/>
    <lineage>
        <taxon>Eukaryota</taxon>
        <taxon>Metazoa</taxon>
        <taxon>Chordata</taxon>
        <taxon>Craniata</taxon>
        <taxon>Vertebrata</taxon>
        <taxon>Euteleostomi</taxon>
        <taxon>Archelosauria</taxon>
        <taxon>Archosauria</taxon>
        <taxon>Dinosauria</taxon>
        <taxon>Saurischia</taxon>
        <taxon>Theropoda</taxon>
        <taxon>Coelurosauria</taxon>
        <taxon>Aves</taxon>
        <taxon>Neognathae</taxon>
        <taxon>Galloanserae</taxon>
        <taxon>Galliformes</taxon>
        <taxon>Phasianidae</taxon>
        <taxon>Meleagridinae</taxon>
        <taxon>Meleagris</taxon>
    </lineage>
</organism>
<name>IOVO_MELGA</name>
<reference key="1">
    <citation type="book" date="1978" name="Regulatory proteolytic enzymes and their inhibitors">
        <title>Evolution of avian ovomucoids.</title>
        <editorList>
            <person name="Magnusson S."/>
            <person name="Ottesen M."/>
            <person name="Foltmann B."/>
            <person name="Dano K."/>
            <person name="Neurath H."/>
        </editorList>
        <authorList>
            <person name="Kato I."/>
            <person name="Kohr W.J."/>
            <person name="Laskowski M. Jr."/>
        </authorList>
    </citation>
    <scope>PROTEIN SEQUENCE</scope>
</reference>
<reference key="2">
    <citation type="journal article" date="1982" name="Proc. Natl. Acad. Sci. U.S.A.">
        <title>Refined crystal structure of the molecular complex of Streptomyces griseus protease B, a serine protease, with the third domain of the ovomucoid inhibitor from turkey.</title>
        <authorList>
            <person name="Fujinaga M."/>
            <person name="Read R.J."/>
            <person name="Sielecki A."/>
            <person name="Ardelt W."/>
            <person name="Laskowski M. Jr."/>
            <person name="James M.N.G."/>
        </authorList>
    </citation>
    <scope>X-RAY CRYSTALLOGRAPHY (1.8 ANGSTROMS) OF THIRD DOMAIN</scope>
</reference>
<reference key="3">
    <citation type="submission" date="1997-07" db="PDB data bank">
        <authorList>
            <person name="Ding J."/>
            <person name="Qasim M.A."/>
            <person name="Laskowski M. Jr."/>
            <person name="James M.N.G."/>
        </authorList>
    </citation>
    <scope>X-RAY CRYSTALLOGRAPHY (2.3 ANGSTROMS) OF THIRD DOMAIN</scope>
</reference>
<reference key="4">
    <citation type="journal article" date="1991" name="Mol. Biol. (Mosk.)">
        <title>Conformation of the third domain of turkey ovomucoid in solution. Structural analysis by two-dimensional Overhauser nuclear effect spectroscopy.</title>
        <authorList>
            <person name="Andrianov A.M."/>
        </authorList>
    </citation>
    <scope>STRUCTURE BY NMR OF THIRD DOMAIN</scope>
</reference>
<reference key="5">
    <citation type="journal article" date="1994" name="J. Mol. Biol.">
        <title>Solution structure of turkey ovomucoid third domain as determined from nuclear magnetic resonance data.</title>
        <authorList>
            <person name="Krezel A.M."/>
            <person name="Darba P."/>
            <person name="Robertson A.D."/>
            <person name="Fejzo J."/>
            <person name="Macura S."/>
            <person name="Markley J.L."/>
        </authorList>
    </citation>
    <scope>STRUCTURE BY NMR OF THIRD DOMAIN</scope>
</reference>
<dbReference type="PIR" id="A01238">
    <property type="entry name" value="TITKM"/>
</dbReference>
<dbReference type="PDB" id="1CHO">
    <property type="method" value="X-ray"/>
    <property type="resolution" value="1.80 A"/>
    <property type="chains" value="I=130-185"/>
</dbReference>
<dbReference type="PDB" id="1CSO">
    <property type="method" value="X-ray"/>
    <property type="resolution" value="1.90 A"/>
    <property type="chains" value="I=135-185"/>
</dbReference>
<dbReference type="PDB" id="1CT0">
    <property type="method" value="X-ray"/>
    <property type="resolution" value="1.80 A"/>
    <property type="chains" value="I=135-185"/>
</dbReference>
<dbReference type="PDB" id="1CT2">
    <property type="method" value="X-ray"/>
    <property type="resolution" value="1.65 A"/>
    <property type="chains" value="I=135-185"/>
</dbReference>
<dbReference type="PDB" id="1CT4">
    <property type="method" value="X-ray"/>
    <property type="resolution" value="1.60 A"/>
    <property type="chains" value="I=135-185"/>
</dbReference>
<dbReference type="PDB" id="1DS2">
    <property type="method" value="X-ray"/>
    <property type="resolution" value="1.70 A"/>
    <property type="chains" value="I=135-185"/>
</dbReference>
<dbReference type="PDB" id="1DS3">
    <property type="method" value="X-ray"/>
    <property type="resolution" value="1.65 A"/>
    <property type="chains" value="I=135-185"/>
</dbReference>
<dbReference type="PDB" id="1HJA">
    <property type="method" value="X-ray"/>
    <property type="resolution" value="2.30 A"/>
    <property type="chains" value="I=135-185"/>
</dbReference>
<dbReference type="PDB" id="1OMT">
    <property type="method" value="NMR"/>
    <property type="chains" value="A=130-185"/>
</dbReference>
<dbReference type="PDB" id="1OMU">
    <property type="method" value="NMR"/>
    <property type="chains" value="A=130-185"/>
</dbReference>
<dbReference type="PDB" id="1PPF">
    <property type="method" value="X-ray"/>
    <property type="resolution" value="1.80 A"/>
    <property type="chains" value="I=130-185"/>
</dbReference>
<dbReference type="PDB" id="1R0R">
    <property type="method" value="X-ray"/>
    <property type="resolution" value="1.10 A"/>
    <property type="chains" value="I=135-185"/>
</dbReference>
<dbReference type="PDB" id="1SGD">
    <property type="method" value="X-ray"/>
    <property type="resolution" value="1.80 A"/>
    <property type="chains" value="I=135-185"/>
</dbReference>
<dbReference type="PDB" id="1SGE">
    <property type="method" value="X-ray"/>
    <property type="resolution" value="1.80 A"/>
    <property type="chains" value="I=135-185"/>
</dbReference>
<dbReference type="PDB" id="1SGN">
    <property type="method" value="X-ray"/>
    <property type="resolution" value="1.80 A"/>
    <property type="chains" value="I=135-185"/>
</dbReference>
<dbReference type="PDB" id="1SGP">
    <property type="method" value="X-ray"/>
    <property type="resolution" value="1.40 A"/>
    <property type="chains" value="I=135-185"/>
</dbReference>
<dbReference type="PDB" id="1SGQ">
    <property type="method" value="X-ray"/>
    <property type="resolution" value="1.90 A"/>
    <property type="chains" value="I=135-185"/>
</dbReference>
<dbReference type="PDB" id="1SGR">
    <property type="method" value="X-ray"/>
    <property type="resolution" value="1.80 A"/>
    <property type="chains" value="I=135-185"/>
</dbReference>
<dbReference type="PDB" id="1SGY">
    <property type="method" value="X-ray"/>
    <property type="resolution" value="1.80 A"/>
    <property type="chains" value="I=135-185"/>
</dbReference>
<dbReference type="PDB" id="1TUR">
    <property type="method" value="NMR"/>
    <property type="chains" value="A=130-185"/>
</dbReference>
<dbReference type="PDB" id="1TUS">
    <property type="method" value="NMR"/>
    <property type="chains" value="A=130-185"/>
</dbReference>
<dbReference type="PDB" id="1YU6">
    <property type="method" value="X-ray"/>
    <property type="resolution" value="1.55 A"/>
    <property type="chains" value="C/D=1-185"/>
</dbReference>
<dbReference type="PDB" id="1Z7K">
    <property type="method" value="X-ray"/>
    <property type="resolution" value="1.90 A"/>
    <property type="chains" value="B=65-126, C=12-15"/>
</dbReference>
<dbReference type="PDB" id="2GKR">
    <property type="method" value="X-ray"/>
    <property type="resolution" value="1.16 A"/>
    <property type="chains" value="I=135-185"/>
</dbReference>
<dbReference type="PDB" id="2GKT">
    <property type="method" value="X-ray"/>
    <property type="resolution" value="1.23 A"/>
    <property type="chains" value="I=135-185"/>
</dbReference>
<dbReference type="PDB" id="2GKV">
    <property type="method" value="X-ray"/>
    <property type="resolution" value="1.70 A"/>
    <property type="chains" value="A/B=135-185"/>
</dbReference>
<dbReference type="PDB" id="2SGD">
    <property type="method" value="X-ray"/>
    <property type="resolution" value="1.80 A"/>
    <property type="chains" value="I=135-185"/>
</dbReference>
<dbReference type="PDB" id="2SGE">
    <property type="method" value="X-ray"/>
    <property type="resolution" value="1.80 A"/>
    <property type="chains" value="I=135-185"/>
</dbReference>
<dbReference type="PDB" id="2SGF">
    <property type="method" value="X-ray"/>
    <property type="resolution" value="1.75 A"/>
    <property type="chains" value="I=135-185"/>
</dbReference>
<dbReference type="PDB" id="2SGP">
    <property type="method" value="X-ray"/>
    <property type="resolution" value="1.80 A"/>
    <property type="chains" value="I=135-185"/>
</dbReference>
<dbReference type="PDB" id="2SGQ">
    <property type="method" value="X-ray"/>
    <property type="resolution" value="1.80 A"/>
    <property type="chains" value="I=135-185"/>
</dbReference>
<dbReference type="PDB" id="3SGB">
    <property type="method" value="X-ray"/>
    <property type="resolution" value="1.80 A"/>
    <property type="chains" value="I=130-185"/>
</dbReference>
<dbReference type="PDB" id="3SGQ">
    <property type="method" value="X-ray"/>
    <property type="resolution" value="1.80 A"/>
    <property type="chains" value="I=135-185"/>
</dbReference>
<dbReference type="PDBsum" id="1CHO"/>
<dbReference type="PDBsum" id="1CSO"/>
<dbReference type="PDBsum" id="1CT0"/>
<dbReference type="PDBsum" id="1CT2"/>
<dbReference type="PDBsum" id="1CT4"/>
<dbReference type="PDBsum" id="1DS2"/>
<dbReference type="PDBsum" id="1DS3"/>
<dbReference type="PDBsum" id="1HJA"/>
<dbReference type="PDBsum" id="1OMT"/>
<dbReference type="PDBsum" id="1OMU"/>
<dbReference type="PDBsum" id="1PPF"/>
<dbReference type="PDBsum" id="1R0R"/>
<dbReference type="PDBsum" id="1SGD"/>
<dbReference type="PDBsum" id="1SGE"/>
<dbReference type="PDBsum" id="1SGN"/>
<dbReference type="PDBsum" id="1SGP"/>
<dbReference type="PDBsum" id="1SGQ"/>
<dbReference type="PDBsum" id="1SGR"/>
<dbReference type="PDBsum" id="1SGY"/>
<dbReference type="PDBsum" id="1TUR"/>
<dbReference type="PDBsum" id="1TUS"/>
<dbReference type="PDBsum" id="1YU6"/>
<dbReference type="PDBsum" id="1Z7K"/>
<dbReference type="PDBsum" id="2GKR"/>
<dbReference type="PDBsum" id="2GKT"/>
<dbReference type="PDBsum" id="2GKV"/>
<dbReference type="PDBsum" id="2SGD"/>
<dbReference type="PDBsum" id="2SGE"/>
<dbReference type="PDBsum" id="2SGF"/>
<dbReference type="PDBsum" id="2SGP"/>
<dbReference type="PDBsum" id="2SGQ"/>
<dbReference type="PDBsum" id="3SGB"/>
<dbReference type="PDBsum" id="3SGQ"/>
<dbReference type="BMRB" id="P68390"/>
<dbReference type="SMR" id="P68390"/>
<dbReference type="MINT" id="P68390"/>
<dbReference type="Allergome" id="2116">
    <property type="allergen name" value="Mel g 1"/>
</dbReference>
<dbReference type="MEROPS" id="I01.001"/>
<dbReference type="MEROPS" id="I01.002"/>
<dbReference type="MEROPS" id="I01.003"/>
<dbReference type="InParanoid" id="P68390"/>
<dbReference type="EvolutionaryTrace" id="P68390"/>
<dbReference type="Proteomes" id="UP000001645">
    <property type="component" value="Unplaced"/>
</dbReference>
<dbReference type="GO" id="GO:0005576">
    <property type="term" value="C:extracellular region"/>
    <property type="evidence" value="ECO:0007669"/>
    <property type="project" value="UniProtKB-SubCell"/>
</dbReference>
<dbReference type="GO" id="GO:0140678">
    <property type="term" value="F:molecular function inhibitor activity"/>
    <property type="evidence" value="ECO:0000269"/>
    <property type="project" value="DisProt"/>
</dbReference>
<dbReference type="GO" id="GO:0004867">
    <property type="term" value="F:serine-type endopeptidase inhibitor activity"/>
    <property type="evidence" value="ECO:0000314"/>
    <property type="project" value="AgBase"/>
</dbReference>
<dbReference type="CDD" id="cd00104">
    <property type="entry name" value="KAZAL_FS"/>
    <property type="match status" value="1"/>
</dbReference>
<dbReference type="CDD" id="cd01327">
    <property type="entry name" value="KAZAL_PSTI"/>
    <property type="match status" value="1"/>
</dbReference>
<dbReference type="DisProt" id="DP01011"/>
<dbReference type="FunFam" id="3.30.60.30:FF:000036">
    <property type="entry name" value="Ovomucoid"/>
    <property type="match status" value="2"/>
</dbReference>
<dbReference type="FunFam" id="3.30.60.30:FF:000037">
    <property type="entry name" value="Ovomucoid"/>
    <property type="match status" value="1"/>
</dbReference>
<dbReference type="Gene3D" id="3.30.60.30">
    <property type="match status" value="3"/>
</dbReference>
<dbReference type="InterPro" id="IPR002350">
    <property type="entry name" value="Kazal_dom"/>
</dbReference>
<dbReference type="InterPro" id="IPR036058">
    <property type="entry name" value="Kazal_dom_sf"/>
</dbReference>
<dbReference type="InterPro" id="IPR001239">
    <property type="entry name" value="Prot_inh_Kazal-m"/>
</dbReference>
<dbReference type="PANTHER" id="PTHR21312:SF28">
    <property type="entry name" value="OVOINHIBITOR-RELATED"/>
    <property type="match status" value="1"/>
</dbReference>
<dbReference type="PANTHER" id="PTHR21312">
    <property type="entry name" value="SERINE PROTEASE INHIBITOR"/>
    <property type="match status" value="1"/>
</dbReference>
<dbReference type="Pfam" id="PF00050">
    <property type="entry name" value="Kazal_1"/>
    <property type="match status" value="3"/>
</dbReference>
<dbReference type="PRINTS" id="PR00290">
    <property type="entry name" value="KAZALINHBTR"/>
</dbReference>
<dbReference type="SMART" id="SM00280">
    <property type="entry name" value="KAZAL"/>
    <property type="match status" value="3"/>
</dbReference>
<dbReference type="SUPFAM" id="SSF100895">
    <property type="entry name" value="Kazal-type serine protease inhibitors"/>
    <property type="match status" value="3"/>
</dbReference>
<dbReference type="PROSITE" id="PS00282">
    <property type="entry name" value="KAZAL_1"/>
    <property type="match status" value="2"/>
</dbReference>
<dbReference type="PROSITE" id="PS51465">
    <property type="entry name" value="KAZAL_2"/>
    <property type="match status" value="3"/>
</dbReference>
<feature type="chain" id="PRO_0000073142" description="Ovomucoid">
    <location>
        <begin position="1"/>
        <end position="185"/>
    </location>
</feature>
<feature type="domain" description="Kazal-like 1" evidence="1">
    <location>
        <begin position="1"/>
        <end position="63"/>
    </location>
</feature>
<feature type="domain" description="Kazal-like 2" evidence="1">
    <location>
        <begin position="64"/>
        <end position="128"/>
    </location>
</feature>
<feature type="domain" description="Kazal-like 3" evidence="1">
    <location>
        <begin position="131"/>
        <end position="185"/>
    </location>
</feature>
<feature type="site" description="Reactive bond 2 for trypsin">
    <location>
        <begin position="88"/>
        <end position="89"/>
    </location>
</feature>
<feature type="site" description="Reactive bond 3 for chymotrypsin, elastase, proteases A and B, and subtilisin">
    <location>
        <begin position="147"/>
        <end position="148"/>
    </location>
</feature>
<feature type="glycosylation site" description="N-linked (GlcNAc...) asparagine">
    <location>
        <position position="174"/>
    </location>
</feature>
<feature type="disulfide bond">
    <location>
        <begin position="5"/>
        <end position="43"/>
    </location>
</feature>
<feature type="disulfide bond">
    <location>
        <begin position="22"/>
        <end position="40"/>
    </location>
</feature>
<feature type="disulfide bond">
    <location>
        <begin position="30"/>
        <end position="61"/>
    </location>
</feature>
<feature type="disulfide bond">
    <location>
        <begin position="69"/>
        <end position="108"/>
    </location>
</feature>
<feature type="disulfide bond">
    <location>
        <begin position="86"/>
        <end position="105"/>
    </location>
</feature>
<feature type="disulfide bond">
    <location>
        <begin position="94"/>
        <end position="126"/>
    </location>
</feature>
<feature type="disulfide bond">
    <location>
        <begin position="137"/>
        <end position="167"/>
    </location>
</feature>
<feature type="disulfide bond">
    <location>
        <begin position="145"/>
        <end position="164"/>
    </location>
</feature>
<feature type="disulfide bond">
    <location>
        <begin position="153"/>
        <end position="185"/>
    </location>
</feature>
<feature type="helix" evidence="4">
    <location>
        <begin position="69"/>
        <end position="71"/>
    </location>
</feature>
<feature type="strand" evidence="4">
    <location>
        <begin position="74"/>
        <end position="76"/>
    </location>
</feature>
<feature type="strand" evidence="4">
    <location>
        <begin position="82"/>
        <end position="84"/>
    </location>
</feature>
<feature type="strand" evidence="4">
    <location>
        <begin position="93"/>
        <end position="95"/>
    </location>
</feature>
<feature type="strand" evidence="4">
    <location>
        <begin position="100"/>
        <end position="103"/>
    </location>
</feature>
<feature type="helix" evidence="4">
    <location>
        <begin position="104"/>
        <end position="114"/>
    </location>
</feature>
<feature type="strand" evidence="4">
    <location>
        <begin position="120"/>
        <end position="124"/>
    </location>
</feature>
<feature type="strand" evidence="2">
    <location>
        <begin position="132"/>
        <end position="134"/>
    </location>
</feature>
<feature type="helix" evidence="2">
    <location>
        <begin position="137"/>
        <end position="139"/>
    </location>
</feature>
<feature type="strand" evidence="3">
    <location>
        <begin position="143"/>
        <end position="146"/>
    </location>
</feature>
<feature type="strand" evidence="3">
    <location>
        <begin position="152"/>
        <end position="154"/>
    </location>
</feature>
<feature type="strand" evidence="3">
    <location>
        <begin position="159"/>
        <end position="162"/>
    </location>
</feature>
<feature type="helix" evidence="3">
    <location>
        <begin position="163"/>
        <end position="172"/>
    </location>
</feature>
<feature type="turn" evidence="3">
    <location>
        <begin position="173"/>
        <end position="175"/>
    </location>
</feature>
<feature type="strand" evidence="3">
    <location>
        <begin position="179"/>
        <end position="183"/>
    </location>
</feature>
<evidence type="ECO:0000255" key="1">
    <source>
        <dbReference type="PROSITE-ProRule" id="PRU00798"/>
    </source>
</evidence>
<evidence type="ECO:0007829" key="2">
    <source>
        <dbReference type="PDB" id="1OMT"/>
    </source>
</evidence>
<evidence type="ECO:0007829" key="3">
    <source>
        <dbReference type="PDB" id="1R0R"/>
    </source>
</evidence>
<evidence type="ECO:0007829" key="4">
    <source>
        <dbReference type="PDB" id="1Z7K"/>
    </source>
</evidence>
<proteinExistence type="evidence at protein level"/>